<keyword id="KW-0008">Acetylcholine receptor inhibiting toxin</keyword>
<keyword id="KW-0903">Direct protein sequencing</keyword>
<keyword id="KW-1015">Disulfide bond</keyword>
<keyword id="KW-0872">Ion channel impairing toxin</keyword>
<keyword id="KW-0528">Neurotoxin</keyword>
<keyword id="KW-0629">Postsynaptic neurotoxin</keyword>
<keyword id="KW-0964">Secreted</keyword>
<keyword id="KW-0800">Toxin</keyword>
<organism>
    <name type="scientific">Naja kaouthia</name>
    <name type="common">Monocled cobra</name>
    <name type="synonym">Naja siamensis</name>
    <dbReference type="NCBI Taxonomy" id="8649"/>
    <lineage>
        <taxon>Eukaryota</taxon>
        <taxon>Metazoa</taxon>
        <taxon>Chordata</taxon>
        <taxon>Craniata</taxon>
        <taxon>Vertebrata</taxon>
        <taxon>Euteleostomi</taxon>
        <taxon>Lepidosauria</taxon>
        <taxon>Squamata</taxon>
        <taxon>Bifurcata</taxon>
        <taxon>Unidentata</taxon>
        <taxon>Episquamata</taxon>
        <taxon>Toxicofera</taxon>
        <taxon>Serpentes</taxon>
        <taxon>Colubroidea</taxon>
        <taxon>Elapidae</taxon>
        <taxon>Elapinae</taxon>
        <taxon>Naja</taxon>
    </lineage>
</organism>
<feature type="chain" id="PRO_0000093613" description="Short neurotoxin 1" evidence="4">
    <location>
        <begin position="1"/>
        <end position="62"/>
    </location>
</feature>
<feature type="region of interest" description="Disordered" evidence="3">
    <location>
        <begin position="1"/>
        <end position="20"/>
    </location>
</feature>
<feature type="compositionally biased region" description="Polar residues" evidence="3">
    <location>
        <begin position="1"/>
        <end position="16"/>
    </location>
</feature>
<feature type="disulfide bond" evidence="1">
    <location>
        <begin position="3"/>
        <end position="24"/>
    </location>
</feature>
<feature type="disulfide bond" evidence="1">
    <location>
        <begin position="17"/>
        <end position="41"/>
    </location>
</feature>
<feature type="disulfide bond" evidence="1">
    <location>
        <begin position="43"/>
        <end position="54"/>
    </location>
</feature>
<feature type="disulfide bond" evidence="1">
    <location>
        <begin position="55"/>
        <end position="60"/>
    </location>
</feature>
<name>3S1B1_NAJKA</name>
<protein>
    <recommendedName>
        <fullName>Short neurotoxin 1</fullName>
    </recommendedName>
    <alternativeName>
        <fullName>Toxin C-6</fullName>
    </alternativeName>
</protein>
<proteinExistence type="evidence at protein level"/>
<dbReference type="PIR" id="JK0221">
    <property type="entry name" value="JK0221"/>
</dbReference>
<dbReference type="BMRB" id="P14613"/>
<dbReference type="SMR" id="P14613"/>
<dbReference type="GO" id="GO:0005576">
    <property type="term" value="C:extracellular region"/>
    <property type="evidence" value="ECO:0007669"/>
    <property type="project" value="UniProtKB-SubCell"/>
</dbReference>
<dbReference type="GO" id="GO:0030550">
    <property type="term" value="F:acetylcholine receptor inhibitor activity"/>
    <property type="evidence" value="ECO:0007669"/>
    <property type="project" value="UniProtKB-KW"/>
</dbReference>
<dbReference type="GO" id="GO:0099106">
    <property type="term" value="F:ion channel regulator activity"/>
    <property type="evidence" value="ECO:0007669"/>
    <property type="project" value="UniProtKB-KW"/>
</dbReference>
<dbReference type="GO" id="GO:0090729">
    <property type="term" value="F:toxin activity"/>
    <property type="evidence" value="ECO:0007669"/>
    <property type="project" value="UniProtKB-KW"/>
</dbReference>
<dbReference type="CDD" id="cd00206">
    <property type="entry name" value="TFP_snake_toxin"/>
    <property type="match status" value="1"/>
</dbReference>
<dbReference type="FunFam" id="2.10.60.10:FF:000024">
    <property type="entry name" value="Cytotoxin 1"/>
    <property type="match status" value="1"/>
</dbReference>
<dbReference type="Gene3D" id="2.10.60.10">
    <property type="entry name" value="CD59"/>
    <property type="match status" value="1"/>
</dbReference>
<dbReference type="InterPro" id="IPR003571">
    <property type="entry name" value="Snake_3FTx"/>
</dbReference>
<dbReference type="InterPro" id="IPR045860">
    <property type="entry name" value="Snake_toxin-like_sf"/>
</dbReference>
<dbReference type="InterPro" id="IPR018354">
    <property type="entry name" value="Snake_toxin_con_site"/>
</dbReference>
<dbReference type="InterPro" id="IPR054131">
    <property type="entry name" value="Toxin_cobra-type"/>
</dbReference>
<dbReference type="Pfam" id="PF21947">
    <property type="entry name" value="Toxin_cobra-type"/>
    <property type="match status" value="1"/>
</dbReference>
<dbReference type="SUPFAM" id="SSF57302">
    <property type="entry name" value="Snake toxin-like"/>
    <property type="match status" value="1"/>
</dbReference>
<dbReference type="PROSITE" id="PS00272">
    <property type="entry name" value="SNAKE_TOXIN"/>
    <property type="match status" value="1"/>
</dbReference>
<sequence length="62" mass="6983">LECHNQQSIQTPTTTGCSGGETNCYKKRWRDHRGYRTERGCGCPSVKNGIEINCCTTDRCNN</sequence>
<reference key="1">
    <citation type="journal article" date="1989" name="Int. J. Pept. Protein Res.">
        <title>Sequence characterization of venom toxins from Thailand cobra.</title>
        <authorList>
            <person name="Chiou S.-H."/>
            <person name="Lin W.-W."/>
            <person name="Chang W.-P."/>
        </authorList>
    </citation>
    <scope>PROTEIN SEQUENCE</scope>
    <scope>SUBCELLULAR LOCATION</scope>
    <source>
        <tissue>Venom</tissue>
    </source>
</reference>
<accession>P14613</accession>
<evidence type="ECO:0000250" key="1">
    <source>
        <dbReference type="UniProtKB" id="P0C1Z0"/>
    </source>
</evidence>
<evidence type="ECO:0000250" key="2">
    <source>
        <dbReference type="UniProtKB" id="P60775"/>
    </source>
</evidence>
<evidence type="ECO:0000256" key="3">
    <source>
        <dbReference type="SAM" id="MobiDB-lite"/>
    </source>
</evidence>
<evidence type="ECO:0000269" key="4">
    <source>
    </source>
</evidence>
<evidence type="ECO:0000305" key="5"/>
<comment type="function">
    <text evidence="2">Binds to muscle nicotinic acetylcholine receptor (nAChR) and inhibit acetylcholine from binding to the receptor, thereby impairing neuromuscular transmission.</text>
</comment>
<comment type="subcellular location">
    <subcellularLocation>
        <location evidence="4">Secreted</location>
    </subcellularLocation>
</comment>
<comment type="tissue specificity">
    <text evidence="5">Expressed by the venom gland.</text>
</comment>
<comment type="similarity">
    <text evidence="5">Belongs to the three-finger toxin family. Short-chain subfamily. Type I alpha-neurotoxin sub-subfamily.</text>
</comment>